<organism>
    <name type="scientific">Corynebacterium diphtheriae (strain ATCC 700971 / NCTC 13129 / Biotype gravis)</name>
    <dbReference type="NCBI Taxonomy" id="257309"/>
    <lineage>
        <taxon>Bacteria</taxon>
        <taxon>Bacillati</taxon>
        <taxon>Actinomycetota</taxon>
        <taxon>Actinomycetes</taxon>
        <taxon>Mycobacteriales</taxon>
        <taxon>Corynebacteriaceae</taxon>
        <taxon>Corynebacterium</taxon>
    </lineage>
</organism>
<name>GLGB_CORDI</name>
<keyword id="KW-0119">Carbohydrate metabolism</keyword>
<keyword id="KW-0320">Glycogen biosynthesis</keyword>
<keyword id="KW-0321">Glycogen metabolism</keyword>
<keyword id="KW-0328">Glycosyltransferase</keyword>
<keyword id="KW-1185">Reference proteome</keyword>
<keyword id="KW-0808">Transferase</keyword>
<accession>Q6NHR6</accession>
<reference key="1">
    <citation type="journal article" date="2003" name="Nucleic Acids Res.">
        <title>The complete genome sequence and analysis of Corynebacterium diphtheriae NCTC13129.</title>
        <authorList>
            <person name="Cerdeno-Tarraga A.-M."/>
            <person name="Efstratiou A."/>
            <person name="Dover L.G."/>
            <person name="Holden M.T.G."/>
            <person name="Pallen M.J."/>
            <person name="Bentley S.D."/>
            <person name="Besra G.S."/>
            <person name="Churcher C.M."/>
            <person name="James K.D."/>
            <person name="De Zoysa A."/>
            <person name="Chillingworth T."/>
            <person name="Cronin A."/>
            <person name="Dowd L."/>
            <person name="Feltwell T."/>
            <person name="Hamlin N."/>
            <person name="Holroyd S."/>
            <person name="Jagels K."/>
            <person name="Moule S."/>
            <person name="Quail M.A."/>
            <person name="Rabbinowitsch E."/>
            <person name="Rutherford K.M."/>
            <person name="Thomson N.R."/>
            <person name="Unwin L."/>
            <person name="Whitehead S."/>
            <person name="Barrell B.G."/>
            <person name="Parkhill J."/>
        </authorList>
    </citation>
    <scope>NUCLEOTIDE SEQUENCE [LARGE SCALE GENOMIC DNA]</scope>
    <source>
        <strain>ATCC 700971 / NCTC 13129 / Biotype gravis</strain>
    </source>
</reference>
<dbReference type="EC" id="2.4.1.18" evidence="1"/>
<dbReference type="EMBL" id="BX248357">
    <property type="protein sequence ID" value="CAE49588.1"/>
    <property type="molecule type" value="Genomic_DNA"/>
</dbReference>
<dbReference type="RefSeq" id="WP_010934779.1">
    <property type="nucleotide sequence ID" value="NC_002935.2"/>
</dbReference>
<dbReference type="SMR" id="Q6NHR6"/>
<dbReference type="STRING" id="257309.DIP1065"/>
<dbReference type="CAZy" id="CBM48">
    <property type="family name" value="Carbohydrate-Binding Module Family 48"/>
</dbReference>
<dbReference type="CAZy" id="GH13">
    <property type="family name" value="Glycoside Hydrolase Family 13"/>
</dbReference>
<dbReference type="KEGG" id="cdi:DIP1065"/>
<dbReference type="HOGENOM" id="CLU_004245_3_2_11"/>
<dbReference type="UniPathway" id="UPA00164"/>
<dbReference type="Proteomes" id="UP000002198">
    <property type="component" value="Chromosome"/>
</dbReference>
<dbReference type="GO" id="GO:0005829">
    <property type="term" value="C:cytosol"/>
    <property type="evidence" value="ECO:0007669"/>
    <property type="project" value="TreeGrafter"/>
</dbReference>
<dbReference type="GO" id="GO:0003844">
    <property type="term" value="F:1,4-alpha-glucan branching enzyme activity"/>
    <property type="evidence" value="ECO:0007669"/>
    <property type="project" value="UniProtKB-UniRule"/>
</dbReference>
<dbReference type="GO" id="GO:0043169">
    <property type="term" value="F:cation binding"/>
    <property type="evidence" value="ECO:0007669"/>
    <property type="project" value="InterPro"/>
</dbReference>
<dbReference type="GO" id="GO:0004553">
    <property type="term" value="F:hydrolase activity, hydrolyzing O-glycosyl compounds"/>
    <property type="evidence" value="ECO:0007669"/>
    <property type="project" value="InterPro"/>
</dbReference>
<dbReference type="GO" id="GO:0005978">
    <property type="term" value="P:glycogen biosynthetic process"/>
    <property type="evidence" value="ECO:0007669"/>
    <property type="project" value="UniProtKB-UniRule"/>
</dbReference>
<dbReference type="CDD" id="cd11322">
    <property type="entry name" value="AmyAc_Glg_BE"/>
    <property type="match status" value="1"/>
</dbReference>
<dbReference type="CDD" id="cd02855">
    <property type="entry name" value="E_set_GBE_prok_N"/>
    <property type="match status" value="1"/>
</dbReference>
<dbReference type="FunFam" id="2.60.40.10:FF:000169">
    <property type="entry name" value="1,4-alpha-glucan branching enzyme GlgB"/>
    <property type="match status" value="1"/>
</dbReference>
<dbReference type="FunFam" id="3.20.20.80:FF:000003">
    <property type="entry name" value="1,4-alpha-glucan branching enzyme GlgB"/>
    <property type="match status" value="1"/>
</dbReference>
<dbReference type="Gene3D" id="3.20.20.80">
    <property type="entry name" value="Glycosidases"/>
    <property type="match status" value="1"/>
</dbReference>
<dbReference type="Gene3D" id="2.60.40.1180">
    <property type="entry name" value="Golgi alpha-mannosidase II"/>
    <property type="match status" value="1"/>
</dbReference>
<dbReference type="Gene3D" id="2.60.40.10">
    <property type="entry name" value="Immunoglobulins"/>
    <property type="match status" value="1"/>
</dbReference>
<dbReference type="HAMAP" id="MF_00685">
    <property type="entry name" value="GlgB"/>
    <property type="match status" value="1"/>
</dbReference>
<dbReference type="InterPro" id="IPR006048">
    <property type="entry name" value="A-amylase/branching_C"/>
</dbReference>
<dbReference type="InterPro" id="IPR037439">
    <property type="entry name" value="Branching_enzy"/>
</dbReference>
<dbReference type="InterPro" id="IPR006407">
    <property type="entry name" value="GlgB"/>
</dbReference>
<dbReference type="InterPro" id="IPR054169">
    <property type="entry name" value="GlgB_N"/>
</dbReference>
<dbReference type="InterPro" id="IPR044143">
    <property type="entry name" value="GlgB_N_E_set_prok"/>
</dbReference>
<dbReference type="InterPro" id="IPR006047">
    <property type="entry name" value="Glyco_hydro_13_cat_dom"/>
</dbReference>
<dbReference type="InterPro" id="IPR004193">
    <property type="entry name" value="Glyco_hydro_13_N"/>
</dbReference>
<dbReference type="InterPro" id="IPR013780">
    <property type="entry name" value="Glyco_hydro_b"/>
</dbReference>
<dbReference type="InterPro" id="IPR017853">
    <property type="entry name" value="Glycoside_hydrolase_SF"/>
</dbReference>
<dbReference type="InterPro" id="IPR013783">
    <property type="entry name" value="Ig-like_fold"/>
</dbReference>
<dbReference type="InterPro" id="IPR014756">
    <property type="entry name" value="Ig_E-set"/>
</dbReference>
<dbReference type="NCBIfam" id="TIGR01515">
    <property type="entry name" value="branching_enzym"/>
    <property type="match status" value="1"/>
</dbReference>
<dbReference type="NCBIfam" id="NF003811">
    <property type="entry name" value="PRK05402.1"/>
    <property type="match status" value="1"/>
</dbReference>
<dbReference type="NCBIfam" id="NF008967">
    <property type="entry name" value="PRK12313.1"/>
    <property type="match status" value="1"/>
</dbReference>
<dbReference type="PANTHER" id="PTHR43651">
    <property type="entry name" value="1,4-ALPHA-GLUCAN-BRANCHING ENZYME"/>
    <property type="match status" value="1"/>
</dbReference>
<dbReference type="PANTHER" id="PTHR43651:SF3">
    <property type="entry name" value="1,4-ALPHA-GLUCAN-BRANCHING ENZYME"/>
    <property type="match status" value="1"/>
</dbReference>
<dbReference type="Pfam" id="PF00128">
    <property type="entry name" value="Alpha-amylase"/>
    <property type="match status" value="2"/>
</dbReference>
<dbReference type="Pfam" id="PF02806">
    <property type="entry name" value="Alpha-amylase_C"/>
    <property type="match status" value="1"/>
</dbReference>
<dbReference type="Pfam" id="PF02922">
    <property type="entry name" value="CBM_48"/>
    <property type="match status" value="1"/>
</dbReference>
<dbReference type="Pfam" id="PF22019">
    <property type="entry name" value="GlgB_N"/>
    <property type="match status" value="1"/>
</dbReference>
<dbReference type="PIRSF" id="PIRSF000463">
    <property type="entry name" value="GlgB"/>
    <property type="match status" value="1"/>
</dbReference>
<dbReference type="SMART" id="SM00642">
    <property type="entry name" value="Aamy"/>
    <property type="match status" value="1"/>
</dbReference>
<dbReference type="SUPFAM" id="SSF51445">
    <property type="entry name" value="(Trans)glycosidases"/>
    <property type="match status" value="1"/>
</dbReference>
<dbReference type="SUPFAM" id="SSF81296">
    <property type="entry name" value="E set domains"/>
    <property type="match status" value="2"/>
</dbReference>
<dbReference type="SUPFAM" id="SSF51011">
    <property type="entry name" value="Glycosyl hydrolase domain"/>
    <property type="match status" value="1"/>
</dbReference>
<sequence length="732" mass="82603">MVSPTQITPVHPDVLHALKICQYHDPHGVYGWHEVDAERAVIRTRHIGAERVETLLSDSTVVELAAVGDDIFEAIVDHDASCDYRLRIHWQGGQVTEQADAYHFLPTLGDLDLHLINEGRHERLWEVLGANPTTITTAMGDVEGTAFAVWAPNASGVAVIGDFCGWNPSQYPMRSLGSTGIWELFIPNIGVGTVYKFAIHTHEGHRLDKADPMAKRAEVAPATGSIIASSSYTWNDDTWMTNRAHTDHDNTAMSVYEVHLGSWSQGQNYEELATNLVDYVKEMGYTHVEFLPVAEHPFGGSWGYQVSGYYAPTSRWGTPDQLRLLIDAFHQAGIGVIVDWVPAHFPKDAFALGRFDGQALYEHPDWRRGEQKDWGTYVFDFGRNEVRNFLVANALYWLEEFHVDGLRVDAVASMLYLDYSREPGEWLPNIYGGRENLEAVQFLQEMNATVHKSHPGVMTIAEESTSWPGVTSPTWEGGLGFSMKWNMGWMNDTLEYFSHEPIHRMYHHNDITFSMVYAYSEKFVLPFSHDEVVHGKGSLWTRMPGDAWNKAAGLRTLYAYMYAHPGKNLLFQGQEFGQVKEWSEERSLDWGDMDGWEGEYHRGIRTLVQDLNALYKDSPALYSQDNNPAGFSWTKSDDAANNILSFVRYGADGSKILAVFNFGGADHPSYKLGVPEGGNWKCILNTDAGIYEGEDNYLDSDVMAWDTDWDGYQHSLTVHIPAMSGQLYRWEA</sequence>
<evidence type="ECO:0000255" key="1">
    <source>
        <dbReference type="HAMAP-Rule" id="MF_00685"/>
    </source>
</evidence>
<feature type="chain" id="PRO_0000188697" description="1,4-alpha-glucan branching enzyme GlgB">
    <location>
        <begin position="1"/>
        <end position="732"/>
    </location>
</feature>
<feature type="active site" description="Nucleophile" evidence="1">
    <location>
        <position position="409"/>
    </location>
</feature>
<feature type="active site" description="Proton donor" evidence="1">
    <location>
        <position position="462"/>
    </location>
</feature>
<proteinExistence type="inferred from homology"/>
<comment type="function">
    <text evidence="1">Catalyzes the formation of the alpha-1,6-glucosidic linkages in glycogen by scission of a 1,4-alpha-linked oligosaccharide from growing alpha-1,4-glucan chains and the subsequent attachment of the oligosaccharide to the alpha-1,6 position.</text>
</comment>
<comment type="catalytic activity">
    <reaction evidence="1">
        <text>Transfers a segment of a (1-&gt;4)-alpha-D-glucan chain to a primary hydroxy group in a similar glucan chain.</text>
        <dbReference type="EC" id="2.4.1.18"/>
    </reaction>
</comment>
<comment type="pathway">
    <text evidence="1">Glycan biosynthesis; glycogen biosynthesis.</text>
</comment>
<comment type="subunit">
    <text evidence="1">Monomer.</text>
</comment>
<comment type="similarity">
    <text evidence="1">Belongs to the glycosyl hydrolase 13 family. GlgB subfamily.</text>
</comment>
<gene>
    <name evidence="1" type="primary">glgB</name>
    <name type="ordered locus">DIP1065</name>
</gene>
<protein>
    <recommendedName>
        <fullName evidence="1">1,4-alpha-glucan branching enzyme GlgB</fullName>
        <ecNumber evidence="1">2.4.1.18</ecNumber>
    </recommendedName>
    <alternativeName>
        <fullName evidence="1">1,4-alpha-D-glucan:1,4-alpha-D-glucan 6-glucosyl-transferase</fullName>
    </alternativeName>
    <alternativeName>
        <fullName evidence="1">Alpha-(1-&gt;4)-glucan branching enzyme</fullName>
    </alternativeName>
    <alternativeName>
        <fullName evidence="1">Glycogen branching enzyme</fullName>
        <shortName evidence="1">BE</shortName>
    </alternativeName>
</protein>